<evidence type="ECO:0000250" key="1"/>
<evidence type="ECO:0000305" key="2"/>
<keyword id="KW-0963">Cytoplasm</keyword>
<keyword id="KW-0342">GTP-binding</keyword>
<keyword id="KW-0547">Nucleotide-binding</keyword>
<keyword id="KW-1185">Reference proteome</keyword>
<feature type="chain" id="PRO_0000225683" description="NF-kappa-B inhibitor-interacting Ras-like protein 2">
    <location>
        <begin position="1"/>
        <end position="163"/>
    </location>
</feature>
<feature type="region of interest" description="Small GTPase-like">
    <location>
        <begin position="1"/>
        <end position="163"/>
    </location>
</feature>
<feature type="short sequence motif" description="Effector region">
    <location>
        <begin position="35"/>
        <end position="43"/>
    </location>
</feature>
<feature type="binding site" evidence="1">
    <location>
        <begin position="11"/>
        <end position="18"/>
    </location>
    <ligand>
        <name>GTP</name>
        <dbReference type="ChEBI" id="CHEBI:37565"/>
    </ligand>
</feature>
<feature type="binding site" evidence="1">
    <location>
        <begin position="61"/>
        <end position="65"/>
    </location>
    <ligand>
        <name>GTP</name>
        <dbReference type="ChEBI" id="CHEBI:37565"/>
    </ligand>
</feature>
<feature type="binding site" evidence="1">
    <location>
        <begin position="120"/>
        <end position="123"/>
    </location>
    <ligand>
        <name>GTP</name>
        <dbReference type="ChEBI" id="CHEBI:37565"/>
    </ligand>
</feature>
<organism>
    <name type="scientific">Xenopus laevis</name>
    <name type="common">African clawed frog</name>
    <dbReference type="NCBI Taxonomy" id="8355"/>
    <lineage>
        <taxon>Eukaryota</taxon>
        <taxon>Metazoa</taxon>
        <taxon>Chordata</taxon>
        <taxon>Craniata</taxon>
        <taxon>Vertebrata</taxon>
        <taxon>Euteleostomi</taxon>
        <taxon>Amphibia</taxon>
        <taxon>Batrachia</taxon>
        <taxon>Anura</taxon>
        <taxon>Pipoidea</taxon>
        <taxon>Pipidae</taxon>
        <taxon>Xenopodinae</taxon>
        <taxon>Xenopus</taxon>
        <taxon>Xenopus</taxon>
    </lineage>
</organism>
<sequence>MGKSCKVVICGQHGVGKTSILEQLLYGNHVVGSDMIETQEDIYIGSVETDRGVREQVRFYDTRGLKDGLELPKHCFCGTDGYVLVYSVDNKDSFKRVEALKKEIDRSKDKKEVTIVVLGNKSDMKDQRRVDHEAAQQWAKAEKILLRNGPTHGSANWNLHPDH</sequence>
<proteinExistence type="evidence at transcript level"/>
<accession>Q32NS2</accession>
<name>KBRS2_XENLA</name>
<comment type="function">
    <text evidence="1">Atypical Ras-like protein that acts as a potent regulator of NF-kappa-B activity by preventing the degradation of NF-kappa-B inhibitor beta (NFKBIB) by most signals, explaining why NFKBIB is more resistant to degradation.</text>
</comment>
<comment type="subcellular location">
    <subcellularLocation>
        <location evidence="1">Cytoplasm</location>
    </subcellularLocation>
</comment>
<comment type="domain">
    <text>In contrast to other members of the Ras family, the members of the KappaB-Ras subfamily do not contain the conserved Gly and Gln residues in positions 13 and 65, which are replaced by His and Leu residues, respectively, and are therefore similar to the constitutively active forms of oncogenic forms of Ras. This suggests that members of this family are clearly different from other small GTPases proteins.</text>
</comment>
<comment type="similarity">
    <text evidence="2">Belongs to the small GTPase superfamily. Ras family. KappaB-Ras subfamily.</text>
</comment>
<protein>
    <recommendedName>
        <fullName>NF-kappa-B inhibitor-interacting Ras-like protein 2</fullName>
    </recommendedName>
    <alternativeName>
        <fullName>I-kappa-B-interacting Ras-like protein 2</fullName>
        <shortName>Kappa B-Ras protein 2</shortName>
        <shortName>KappaB-Ras2</shortName>
    </alternativeName>
</protein>
<dbReference type="EMBL" id="BC108504">
    <property type="protein sequence ID" value="AAI08505.1"/>
    <property type="molecule type" value="mRNA"/>
</dbReference>
<dbReference type="RefSeq" id="NP_001089825.1">
    <property type="nucleotide sequence ID" value="NM_001096356.1"/>
</dbReference>
<dbReference type="SMR" id="Q32NS2"/>
<dbReference type="DNASU" id="734891"/>
<dbReference type="GeneID" id="734891"/>
<dbReference type="KEGG" id="xla:734891"/>
<dbReference type="AGR" id="Xenbase:XB-GENE-6254992"/>
<dbReference type="CTD" id="734891"/>
<dbReference type="Xenbase" id="XB-GENE-6254992">
    <property type="gene designation" value="nkiras2.L"/>
</dbReference>
<dbReference type="OrthoDB" id="10002389at2759"/>
<dbReference type="Proteomes" id="UP000186698">
    <property type="component" value="Chromosome 9_10L"/>
</dbReference>
<dbReference type="Bgee" id="734891">
    <property type="expression patterns" value="Expressed in internal ear and 19 other cell types or tissues"/>
</dbReference>
<dbReference type="GO" id="GO:0005737">
    <property type="term" value="C:cytoplasm"/>
    <property type="evidence" value="ECO:0007669"/>
    <property type="project" value="UniProtKB-SubCell"/>
</dbReference>
<dbReference type="GO" id="GO:0005525">
    <property type="term" value="F:GTP binding"/>
    <property type="evidence" value="ECO:0007669"/>
    <property type="project" value="UniProtKB-KW"/>
</dbReference>
<dbReference type="GO" id="GO:0032794">
    <property type="term" value="F:GTPase activating protein binding"/>
    <property type="evidence" value="ECO:0000318"/>
    <property type="project" value="GO_Central"/>
</dbReference>
<dbReference type="GO" id="GO:0003924">
    <property type="term" value="F:GTPase activity"/>
    <property type="evidence" value="ECO:0007669"/>
    <property type="project" value="InterPro"/>
</dbReference>
<dbReference type="GO" id="GO:0043124">
    <property type="term" value="P:negative regulation of canonical NF-kappaB signal transduction"/>
    <property type="evidence" value="ECO:0007669"/>
    <property type="project" value="InterPro"/>
</dbReference>
<dbReference type="GO" id="GO:0032484">
    <property type="term" value="P:Ral protein signal transduction"/>
    <property type="evidence" value="ECO:0000318"/>
    <property type="project" value="GO_Central"/>
</dbReference>
<dbReference type="Gene3D" id="3.40.50.300">
    <property type="entry name" value="P-loop containing nucleotide triphosphate hydrolases"/>
    <property type="match status" value="1"/>
</dbReference>
<dbReference type="InterPro" id="IPR042227">
    <property type="entry name" value="KBRS"/>
</dbReference>
<dbReference type="InterPro" id="IPR027417">
    <property type="entry name" value="P-loop_NTPase"/>
</dbReference>
<dbReference type="InterPro" id="IPR005225">
    <property type="entry name" value="Small_GTP-bd"/>
</dbReference>
<dbReference type="InterPro" id="IPR001806">
    <property type="entry name" value="Small_GTPase"/>
</dbReference>
<dbReference type="NCBIfam" id="TIGR00231">
    <property type="entry name" value="small_GTP"/>
    <property type="match status" value="1"/>
</dbReference>
<dbReference type="PANTHER" id="PTHR46152">
    <property type="entry name" value="NF-KAPPA-B INHIBITOR-INTERACTING RAS-LIKE PROTEIN"/>
    <property type="match status" value="1"/>
</dbReference>
<dbReference type="PANTHER" id="PTHR46152:SF2">
    <property type="entry name" value="NF-KAPPA-B INHIBITOR-INTERACTING RAS-LIKE PROTEIN 2"/>
    <property type="match status" value="1"/>
</dbReference>
<dbReference type="Pfam" id="PF00071">
    <property type="entry name" value="Ras"/>
    <property type="match status" value="1"/>
</dbReference>
<dbReference type="PRINTS" id="PR00449">
    <property type="entry name" value="RASTRNSFRMNG"/>
</dbReference>
<dbReference type="SMART" id="SM00175">
    <property type="entry name" value="RAB"/>
    <property type="match status" value="1"/>
</dbReference>
<dbReference type="SMART" id="SM00173">
    <property type="entry name" value="RAS"/>
    <property type="match status" value="1"/>
</dbReference>
<dbReference type="SUPFAM" id="SSF52540">
    <property type="entry name" value="P-loop containing nucleoside triphosphate hydrolases"/>
    <property type="match status" value="1"/>
</dbReference>
<dbReference type="PROSITE" id="PS51419">
    <property type="entry name" value="RAB"/>
    <property type="match status" value="1"/>
</dbReference>
<reference key="1">
    <citation type="submission" date="2005-11" db="EMBL/GenBank/DDBJ databases">
        <authorList>
            <consortium name="NIH - Xenopus Gene Collection (XGC) project"/>
        </authorList>
    </citation>
    <scope>NUCLEOTIDE SEQUENCE [LARGE SCALE MRNA]</scope>
    <source>
        <tissue>Testis</tissue>
    </source>
</reference>
<gene>
    <name type="primary">nkiras2</name>
</gene>